<feature type="chain" id="PRO_0000115194" description="DNA mismatch repair protein MSH3">
    <location>
        <begin position="1"/>
        <end position="1081"/>
    </location>
</feature>
<feature type="region of interest" description="Disordered" evidence="2">
    <location>
        <begin position="1"/>
        <end position="77"/>
    </location>
</feature>
<feature type="compositionally biased region" description="Polar residues" evidence="2">
    <location>
        <begin position="1"/>
        <end position="10"/>
    </location>
</feature>
<feature type="binding site" evidence="1">
    <location>
        <begin position="817"/>
        <end position="824"/>
    </location>
    <ligand>
        <name>ATP</name>
        <dbReference type="ChEBI" id="CHEBI:30616"/>
    </ligand>
</feature>
<reference key="1">
    <citation type="journal article" date="1999" name="Mol. Gen. Genet.">
        <title>Four mismatch repair paralogues coexist in Arabidopsis thaliana: AtMSH2, AtMSH3, AtMSH6-1 and AtMSH6-2.</title>
        <authorList>
            <person name="Ade J."/>
            <person name="Belzile F."/>
            <person name="Philippe H."/>
            <person name="Doutriaux M.P."/>
        </authorList>
    </citation>
    <scope>NUCLEOTIDE SEQUENCE [MRNA]</scope>
    <source>
        <strain>cv. Columbia</strain>
    </source>
</reference>
<reference key="2">
    <citation type="journal article" date="1999" name="Nature">
        <title>Sequence and analysis of chromosome 4 of the plant Arabidopsis thaliana.</title>
        <authorList>
            <person name="Mayer K.F.X."/>
            <person name="Schueller C."/>
            <person name="Wambutt R."/>
            <person name="Murphy G."/>
            <person name="Volckaert G."/>
            <person name="Pohl T."/>
            <person name="Duesterhoeft A."/>
            <person name="Stiekema W."/>
            <person name="Entian K.-D."/>
            <person name="Terryn N."/>
            <person name="Harris B."/>
            <person name="Ansorge W."/>
            <person name="Brandt P."/>
            <person name="Grivell L.A."/>
            <person name="Rieger M."/>
            <person name="Weichselgartner M."/>
            <person name="de Simone V."/>
            <person name="Obermaier B."/>
            <person name="Mache R."/>
            <person name="Mueller M."/>
            <person name="Kreis M."/>
            <person name="Delseny M."/>
            <person name="Puigdomenech P."/>
            <person name="Watson M."/>
            <person name="Schmidtheini T."/>
            <person name="Reichert B."/>
            <person name="Portetelle D."/>
            <person name="Perez-Alonso M."/>
            <person name="Boutry M."/>
            <person name="Bancroft I."/>
            <person name="Vos P."/>
            <person name="Hoheisel J."/>
            <person name="Zimmermann W."/>
            <person name="Wedler H."/>
            <person name="Ridley P."/>
            <person name="Langham S.-A."/>
            <person name="McCullagh B."/>
            <person name="Bilham L."/>
            <person name="Robben J."/>
            <person name="van der Schueren J."/>
            <person name="Grymonprez B."/>
            <person name="Chuang Y.-J."/>
            <person name="Vandenbussche F."/>
            <person name="Braeken M."/>
            <person name="Weltjens I."/>
            <person name="Voet M."/>
            <person name="Bastiaens I."/>
            <person name="Aert R."/>
            <person name="Defoor E."/>
            <person name="Weitzenegger T."/>
            <person name="Bothe G."/>
            <person name="Ramsperger U."/>
            <person name="Hilbert H."/>
            <person name="Braun M."/>
            <person name="Holzer E."/>
            <person name="Brandt A."/>
            <person name="Peters S."/>
            <person name="van Staveren M."/>
            <person name="Dirkse W."/>
            <person name="Mooijman P."/>
            <person name="Klein Lankhorst R."/>
            <person name="Rose M."/>
            <person name="Hauf J."/>
            <person name="Koetter P."/>
            <person name="Berneiser S."/>
            <person name="Hempel S."/>
            <person name="Feldpausch M."/>
            <person name="Lamberth S."/>
            <person name="Van den Daele H."/>
            <person name="De Keyser A."/>
            <person name="Buysshaert C."/>
            <person name="Gielen J."/>
            <person name="Villarroel R."/>
            <person name="De Clercq R."/>
            <person name="van Montagu M."/>
            <person name="Rogers J."/>
            <person name="Cronin A."/>
            <person name="Quail M.A."/>
            <person name="Bray-Allen S."/>
            <person name="Clark L."/>
            <person name="Doggett J."/>
            <person name="Hall S."/>
            <person name="Kay M."/>
            <person name="Lennard N."/>
            <person name="McLay K."/>
            <person name="Mayes R."/>
            <person name="Pettett A."/>
            <person name="Rajandream M.A."/>
            <person name="Lyne M."/>
            <person name="Benes V."/>
            <person name="Rechmann S."/>
            <person name="Borkova D."/>
            <person name="Bloecker H."/>
            <person name="Scharfe M."/>
            <person name="Grimm M."/>
            <person name="Loehnert T.-H."/>
            <person name="Dose S."/>
            <person name="de Haan M."/>
            <person name="Maarse A.C."/>
            <person name="Schaefer M."/>
            <person name="Mueller-Auer S."/>
            <person name="Gabel C."/>
            <person name="Fuchs M."/>
            <person name="Fartmann B."/>
            <person name="Granderath K."/>
            <person name="Dauner D."/>
            <person name="Herzl A."/>
            <person name="Neumann S."/>
            <person name="Argiriou A."/>
            <person name="Vitale D."/>
            <person name="Liguori R."/>
            <person name="Piravandi E."/>
            <person name="Massenet O."/>
            <person name="Quigley F."/>
            <person name="Clabauld G."/>
            <person name="Muendlein A."/>
            <person name="Felber R."/>
            <person name="Schnabl S."/>
            <person name="Hiller R."/>
            <person name="Schmidt W."/>
            <person name="Lecharny A."/>
            <person name="Aubourg S."/>
            <person name="Chefdor F."/>
            <person name="Cooke R."/>
            <person name="Berger C."/>
            <person name="Monfort A."/>
            <person name="Casacuberta E."/>
            <person name="Gibbons T."/>
            <person name="Weber N."/>
            <person name="Vandenbol M."/>
            <person name="Bargues M."/>
            <person name="Terol J."/>
            <person name="Torres A."/>
            <person name="Perez-Perez A."/>
            <person name="Purnelle B."/>
            <person name="Bent E."/>
            <person name="Johnson S."/>
            <person name="Tacon D."/>
            <person name="Jesse T."/>
            <person name="Heijnen L."/>
            <person name="Schwarz S."/>
            <person name="Scholler P."/>
            <person name="Heber S."/>
            <person name="Francs P."/>
            <person name="Bielke C."/>
            <person name="Frishman D."/>
            <person name="Haase D."/>
            <person name="Lemcke K."/>
            <person name="Mewes H.-W."/>
            <person name="Stocker S."/>
            <person name="Zaccaria P."/>
            <person name="Bevan M."/>
            <person name="Wilson R.K."/>
            <person name="de la Bastide M."/>
            <person name="Habermann K."/>
            <person name="Parnell L."/>
            <person name="Dedhia N."/>
            <person name="Gnoj L."/>
            <person name="Schutz K."/>
            <person name="Huang E."/>
            <person name="Spiegel L."/>
            <person name="Sekhon M."/>
            <person name="Murray J."/>
            <person name="Sheet P."/>
            <person name="Cordes M."/>
            <person name="Abu-Threideh J."/>
            <person name="Stoneking T."/>
            <person name="Kalicki J."/>
            <person name="Graves T."/>
            <person name="Harmon G."/>
            <person name="Edwards J."/>
            <person name="Latreille P."/>
            <person name="Courtney L."/>
            <person name="Cloud J."/>
            <person name="Abbott A."/>
            <person name="Scott K."/>
            <person name="Johnson D."/>
            <person name="Minx P."/>
            <person name="Bentley D."/>
            <person name="Fulton B."/>
            <person name="Miller N."/>
            <person name="Greco T."/>
            <person name="Kemp K."/>
            <person name="Kramer J."/>
            <person name="Fulton L."/>
            <person name="Mardis E."/>
            <person name="Dante M."/>
            <person name="Pepin K."/>
            <person name="Hillier L.W."/>
            <person name="Nelson J."/>
            <person name="Spieth J."/>
            <person name="Ryan E."/>
            <person name="Andrews S."/>
            <person name="Geisel C."/>
            <person name="Layman D."/>
            <person name="Du H."/>
            <person name="Ali J."/>
            <person name="Berghoff A."/>
            <person name="Jones K."/>
            <person name="Drone K."/>
            <person name="Cotton M."/>
            <person name="Joshu C."/>
            <person name="Antonoiu B."/>
            <person name="Zidanic M."/>
            <person name="Strong C."/>
            <person name="Sun H."/>
            <person name="Lamar B."/>
            <person name="Yordan C."/>
            <person name="Ma P."/>
            <person name="Zhong J."/>
            <person name="Preston R."/>
            <person name="Vil D."/>
            <person name="Shekher M."/>
            <person name="Matero A."/>
            <person name="Shah R."/>
            <person name="Swaby I.K."/>
            <person name="O'Shaughnessy A."/>
            <person name="Rodriguez M."/>
            <person name="Hoffman J."/>
            <person name="Till S."/>
            <person name="Granat S."/>
            <person name="Shohdy N."/>
            <person name="Hasegawa A."/>
            <person name="Hameed A."/>
            <person name="Lodhi M."/>
            <person name="Johnson A."/>
            <person name="Chen E."/>
            <person name="Marra M.A."/>
            <person name="Martienssen R."/>
            <person name="McCombie W.R."/>
        </authorList>
    </citation>
    <scope>NUCLEOTIDE SEQUENCE [LARGE SCALE GENOMIC DNA]</scope>
    <source>
        <strain>cv. Columbia</strain>
    </source>
</reference>
<reference key="3">
    <citation type="journal article" date="2017" name="Plant J.">
        <title>Araport11: a complete reannotation of the Arabidopsis thaliana reference genome.</title>
        <authorList>
            <person name="Cheng C.Y."/>
            <person name="Krishnakumar V."/>
            <person name="Chan A.P."/>
            <person name="Thibaud-Nissen F."/>
            <person name="Schobel S."/>
            <person name="Town C.D."/>
        </authorList>
    </citation>
    <scope>GENOME REANNOTATION</scope>
    <source>
        <strain>cv. Columbia</strain>
    </source>
</reference>
<reference key="4">
    <citation type="journal article" date="2000" name="Plant Cell">
        <title>Arabidopsis MutS homologs-AtMSH2, AtMSH3, AtMSH6, and a novel AtMSH7-form three distinct protein heterodimers with different specificities for mismatched DNA.</title>
        <authorList>
            <person name="Culligan K.M."/>
            <person name="Hays J.B."/>
        </authorList>
    </citation>
    <scope>FUNCTION</scope>
    <scope>INTERACTION WITH MSH2</scope>
</reference>
<name>MSH3_ARATH</name>
<keyword id="KW-0067">ATP-binding</keyword>
<keyword id="KW-0227">DNA damage</keyword>
<keyword id="KW-0234">DNA repair</keyword>
<keyword id="KW-0238">DNA-binding</keyword>
<keyword id="KW-0547">Nucleotide-binding</keyword>
<keyword id="KW-0539">Nucleus</keyword>
<keyword id="KW-1185">Reference proteome</keyword>
<accession>O65607</accession>
<accession>O81818</accession>
<sequence>MGKQKQQTISRFFAPKPKSPTHEPNPVAESSTPPPKISATVSFSPSKRKLLSDHLAAASPKKPKLSPHTQNPVPDPNLHQRFLQRFLEPSPEEYVPETSSSRKYTPLEQQVVELKSKYPDVVLMVEVGYRYRFFGEDAEIAARVLGIYAHMDHNFMTASVPTFRLNFHVRRLVNAGYKIGVVKQTETAAIKSHGANRTGPFFRGLSALYTKATLEAAEDISGGCGGEEGFGSQSNFLVCVVDERVKSETLGCGIEMSFDVRVGVVGVEISTGEVVYEEFNDNFMRSGLEAVILSLSPAELLLGQPLSQQTEKFLVAHAGPTSNVRVERASLDCFSNGNAVDEVISLCEKISAGNLEDDKEMKLEAAEKGMSCLTVHTIMNMPHLTVQALALTFCHLKQFGFERILYQGASFRSLSSNTEMTLSANTLQQLEVVKNNSDGSESGSLFHNMNHTLTVYGSRLLRHWVTHPLCDRNLISARLDAVSEISACMGSHSSSQLSSELVEEGSERAIVSPEFYLVLSSVLTAMSRSSDIQRGITRIFHRTAKATEFIAVMEAILLAGKQIQRLGIKQDSEMRSMQSATVRSTLLRKLISVISSPVVVDNAGKLLSALNKEAAVRGDLLDILITSSDQFPELAEARQAVLVIREKLDSSIASFRKKLAIRNLEFLQVSGITHLIELPVDSKVPMNWVKVNSTKKTIRYHPPEIVAGLDELALATEHLAIVNRASWDSFLKSFSRYYTDFKAAVQALAALDCLHSLSTLSRNKNYVRPEFVDDCEPVEINIQSGRHPVLETILQDNFVPNDTILHAEGEYCQIITGPNMGGKSCYIRQVALISIMAQVGSFVPASFAKLHVLDGVFTRMGASDSIQHGRSTFLEELSEASHIIRTCSSRSLVILDELGRGTSTHDGVAIAYATLQHLLAEKRCLVLFVTHYPEIAEISNGFPGSVGTYHVSYLTLQKDKGSYDHDDVTYLYKLVRGLCSRSFGFKVAQLAQIPPSCIRRAISMAAKLEAEVRARERNTRMGEPEGHEEPRGAEESISALGDLFADLKFALSEEDPWKAFEFLKHAWKIAGKIRLKPTCSF</sequence>
<organism>
    <name type="scientific">Arabidopsis thaliana</name>
    <name type="common">Mouse-ear cress</name>
    <dbReference type="NCBI Taxonomy" id="3702"/>
    <lineage>
        <taxon>Eukaryota</taxon>
        <taxon>Viridiplantae</taxon>
        <taxon>Streptophyta</taxon>
        <taxon>Embryophyta</taxon>
        <taxon>Tracheophyta</taxon>
        <taxon>Spermatophyta</taxon>
        <taxon>Magnoliopsida</taxon>
        <taxon>eudicotyledons</taxon>
        <taxon>Gunneridae</taxon>
        <taxon>Pentapetalae</taxon>
        <taxon>rosids</taxon>
        <taxon>malvids</taxon>
        <taxon>Brassicales</taxon>
        <taxon>Brassicaceae</taxon>
        <taxon>Camelineae</taxon>
        <taxon>Arabidopsis</taxon>
    </lineage>
</organism>
<comment type="function">
    <text evidence="3">Component of the post-replicative DNA mismatch repair system (MMR). Forms the heterodimer MutS beta (MSH2-MSH3 heterodimer) which binds to DNA mismatches thereby initiating DNA repair. MutS beta recognizes single base mismatches and trinucleotide insertion-deletion loops (IDL) in the DNA.</text>
</comment>
<comment type="subunit">
    <text>Heterodimer consisting of MSH2-MSH3 (MutS beta).</text>
</comment>
<comment type="subcellular location">
    <subcellularLocation>
        <location evidence="4">Nucleus</location>
    </subcellularLocation>
</comment>
<comment type="similarity">
    <text evidence="4">Belongs to the DNA mismatch repair MutS family. MSH3 subfamily.</text>
</comment>
<comment type="sequence caution" evidence="4">
    <conflict type="erroneous gene model prediction">
        <sequence resource="EMBL-CDS" id="CAA18172"/>
    </conflict>
</comment>
<dbReference type="EMBL" id="AJ007791">
    <property type="protein sequence ID" value="CAA07684.1"/>
    <property type="molecule type" value="mRNA"/>
</dbReference>
<dbReference type="EMBL" id="AL022197">
    <property type="protein sequence ID" value="CAA18172.1"/>
    <property type="status" value="ALT_SEQ"/>
    <property type="molecule type" value="Genomic_DNA"/>
</dbReference>
<dbReference type="EMBL" id="CP002687">
    <property type="protein sequence ID" value="AEE85075.1"/>
    <property type="molecule type" value="Genomic_DNA"/>
</dbReference>
<dbReference type="PIR" id="T05793">
    <property type="entry name" value="T05793"/>
</dbReference>
<dbReference type="PIR" id="T51613">
    <property type="entry name" value="T51613"/>
</dbReference>
<dbReference type="RefSeq" id="NP_194284.2">
    <property type="nucleotide sequence ID" value="NM_118686.3"/>
</dbReference>
<dbReference type="SMR" id="O65607"/>
<dbReference type="BioGRID" id="13946">
    <property type="interactions" value="1"/>
</dbReference>
<dbReference type="FunCoup" id="O65607">
    <property type="interactions" value="1624"/>
</dbReference>
<dbReference type="STRING" id="3702.O65607"/>
<dbReference type="iPTMnet" id="O65607"/>
<dbReference type="PaxDb" id="3702-AT4G25540.1"/>
<dbReference type="ProteomicsDB" id="238914"/>
<dbReference type="EnsemblPlants" id="AT4G25540.1">
    <property type="protein sequence ID" value="AT4G25540.1"/>
    <property type="gene ID" value="AT4G25540"/>
</dbReference>
<dbReference type="GeneID" id="828659"/>
<dbReference type="Gramene" id="AT4G25540.1">
    <property type="protein sequence ID" value="AT4G25540.1"/>
    <property type="gene ID" value="AT4G25540"/>
</dbReference>
<dbReference type="KEGG" id="ath:AT4G25540"/>
<dbReference type="Araport" id="AT4G25540"/>
<dbReference type="TAIR" id="AT4G25540">
    <property type="gene designation" value="MSH3"/>
</dbReference>
<dbReference type="eggNOG" id="KOG0218">
    <property type="taxonomic scope" value="Eukaryota"/>
</dbReference>
<dbReference type="HOGENOM" id="CLU_002472_0_2_1"/>
<dbReference type="InParanoid" id="O65607"/>
<dbReference type="OMA" id="INMHAAR"/>
<dbReference type="OrthoDB" id="10252754at2759"/>
<dbReference type="PhylomeDB" id="O65607"/>
<dbReference type="PRO" id="PR:O65607"/>
<dbReference type="Proteomes" id="UP000006548">
    <property type="component" value="Chromosome 4"/>
</dbReference>
<dbReference type="ExpressionAtlas" id="O65607">
    <property type="expression patterns" value="baseline and differential"/>
</dbReference>
<dbReference type="GO" id="GO:0005634">
    <property type="term" value="C:nucleus"/>
    <property type="evidence" value="ECO:0007669"/>
    <property type="project" value="UniProtKB-SubCell"/>
</dbReference>
<dbReference type="GO" id="GO:0005524">
    <property type="term" value="F:ATP binding"/>
    <property type="evidence" value="ECO:0007669"/>
    <property type="project" value="UniProtKB-KW"/>
</dbReference>
<dbReference type="GO" id="GO:0140664">
    <property type="term" value="F:ATP-dependent DNA damage sensor activity"/>
    <property type="evidence" value="ECO:0007669"/>
    <property type="project" value="InterPro"/>
</dbReference>
<dbReference type="GO" id="GO:0003684">
    <property type="term" value="F:damaged DNA binding"/>
    <property type="evidence" value="ECO:0000314"/>
    <property type="project" value="TAIR"/>
</dbReference>
<dbReference type="GO" id="GO:0030983">
    <property type="term" value="F:mismatched DNA binding"/>
    <property type="evidence" value="ECO:0000314"/>
    <property type="project" value="TAIR"/>
</dbReference>
<dbReference type="GO" id="GO:0006298">
    <property type="term" value="P:mismatch repair"/>
    <property type="evidence" value="ECO:0000250"/>
    <property type="project" value="TAIR"/>
</dbReference>
<dbReference type="CDD" id="cd03287">
    <property type="entry name" value="ABC_MSH3_euk"/>
    <property type="match status" value="1"/>
</dbReference>
<dbReference type="FunFam" id="3.30.420.110:FF:000010">
    <property type="entry name" value="DNA mismatch repair protein"/>
    <property type="match status" value="1"/>
</dbReference>
<dbReference type="FunFam" id="3.40.1170.10:FF:000004">
    <property type="entry name" value="DNA mismatch repair protein"/>
    <property type="match status" value="1"/>
</dbReference>
<dbReference type="FunFam" id="3.40.50.300:FF:002130">
    <property type="entry name" value="DNA mismatch repair protein MSH3"/>
    <property type="match status" value="1"/>
</dbReference>
<dbReference type="FunFam" id="1.10.1420.10:FF:000004">
    <property type="entry name" value="DNA mismatch repair protein Msh3"/>
    <property type="match status" value="1"/>
</dbReference>
<dbReference type="Gene3D" id="1.10.1420.10">
    <property type="match status" value="2"/>
</dbReference>
<dbReference type="Gene3D" id="3.40.1170.10">
    <property type="entry name" value="DNA repair protein MutS, domain I"/>
    <property type="match status" value="1"/>
</dbReference>
<dbReference type="Gene3D" id="3.30.420.110">
    <property type="entry name" value="MutS, connector domain"/>
    <property type="match status" value="1"/>
</dbReference>
<dbReference type="Gene3D" id="3.40.50.300">
    <property type="entry name" value="P-loop containing nucleotide triphosphate hydrolases"/>
    <property type="match status" value="1"/>
</dbReference>
<dbReference type="InterPro" id="IPR007695">
    <property type="entry name" value="DNA_mismatch_repair_MutS-lik_N"/>
</dbReference>
<dbReference type="InterPro" id="IPR017261">
    <property type="entry name" value="DNA_mismatch_repair_MutS/MSH"/>
</dbReference>
<dbReference type="InterPro" id="IPR000432">
    <property type="entry name" value="DNA_mismatch_repair_MutS_C"/>
</dbReference>
<dbReference type="InterPro" id="IPR007861">
    <property type="entry name" value="DNA_mismatch_repair_MutS_clamp"/>
</dbReference>
<dbReference type="InterPro" id="IPR007696">
    <property type="entry name" value="DNA_mismatch_repair_MutS_core"/>
</dbReference>
<dbReference type="InterPro" id="IPR016151">
    <property type="entry name" value="DNA_mismatch_repair_MutS_N"/>
</dbReference>
<dbReference type="InterPro" id="IPR036187">
    <property type="entry name" value="DNA_mismatch_repair_MutS_sf"/>
</dbReference>
<dbReference type="InterPro" id="IPR007860">
    <property type="entry name" value="DNA_mmatch_repair_MutS_con_dom"/>
</dbReference>
<dbReference type="InterPro" id="IPR045076">
    <property type="entry name" value="MutS"/>
</dbReference>
<dbReference type="InterPro" id="IPR036678">
    <property type="entry name" value="MutS_con_dom_sf"/>
</dbReference>
<dbReference type="InterPro" id="IPR027417">
    <property type="entry name" value="P-loop_NTPase"/>
</dbReference>
<dbReference type="PANTHER" id="PTHR11361:SF122">
    <property type="entry name" value="DNA MISMATCH REPAIR PROTEIN MSH3"/>
    <property type="match status" value="1"/>
</dbReference>
<dbReference type="PANTHER" id="PTHR11361">
    <property type="entry name" value="DNA MISMATCH REPAIR PROTEIN MUTS FAMILY MEMBER"/>
    <property type="match status" value="1"/>
</dbReference>
<dbReference type="Pfam" id="PF01624">
    <property type="entry name" value="MutS_I"/>
    <property type="match status" value="1"/>
</dbReference>
<dbReference type="Pfam" id="PF05188">
    <property type="entry name" value="MutS_II"/>
    <property type="match status" value="1"/>
</dbReference>
<dbReference type="Pfam" id="PF05192">
    <property type="entry name" value="MutS_III"/>
    <property type="match status" value="1"/>
</dbReference>
<dbReference type="Pfam" id="PF05190">
    <property type="entry name" value="MutS_IV"/>
    <property type="match status" value="1"/>
</dbReference>
<dbReference type="Pfam" id="PF00488">
    <property type="entry name" value="MutS_V"/>
    <property type="match status" value="1"/>
</dbReference>
<dbReference type="PIRSF" id="PIRSF037677">
    <property type="entry name" value="DNA_mis_repair_Msh6"/>
    <property type="match status" value="1"/>
</dbReference>
<dbReference type="SMART" id="SM00534">
    <property type="entry name" value="MUTSac"/>
    <property type="match status" value="1"/>
</dbReference>
<dbReference type="SMART" id="SM00533">
    <property type="entry name" value="MUTSd"/>
    <property type="match status" value="1"/>
</dbReference>
<dbReference type="SUPFAM" id="SSF55271">
    <property type="entry name" value="DNA repair protein MutS, domain I"/>
    <property type="match status" value="1"/>
</dbReference>
<dbReference type="SUPFAM" id="SSF53150">
    <property type="entry name" value="DNA repair protein MutS, domain II"/>
    <property type="match status" value="1"/>
</dbReference>
<dbReference type="SUPFAM" id="SSF48334">
    <property type="entry name" value="DNA repair protein MutS, domain III"/>
    <property type="match status" value="1"/>
</dbReference>
<dbReference type="SUPFAM" id="SSF52540">
    <property type="entry name" value="P-loop containing nucleoside triphosphate hydrolases"/>
    <property type="match status" value="1"/>
</dbReference>
<dbReference type="PROSITE" id="PS00486">
    <property type="entry name" value="DNA_MISMATCH_REPAIR_2"/>
    <property type="match status" value="1"/>
</dbReference>
<protein>
    <recommendedName>
        <fullName>DNA mismatch repair protein MSH3</fullName>
        <shortName>AtMSH3</shortName>
    </recommendedName>
    <alternativeName>
        <fullName>MutS protein homolog 3</fullName>
    </alternativeName>
</protein>
<evidence type="ECO:0000255" key="1"/>
<evidence type="ECO:0000256" key="2">
    <source>
        <dbReference type="SAM" id="MobiDB-lite"/>
    </source>
</evidence>
<evidence type="ECO:0000269" key="3">
    <source>
    </source>
</evidence>
<evidence type="ECO:0000305" key="4"/>
<proteinExistence type="evidence at protein level"/>
<gene>
    <name type="primary">MSH3</name>
    <name type="ordered locus">At4g25540</name>
    <name type="ORF">M7J2.90</name>
</gene>